<feature type="chain" id="PRO_0000115388" description="Small ribosomal subunit protein uS15">
    <location>
        <begin position="1"/>
        <end position="89"/>
    </location>
</feature>
<organism>
    <name type="scientific">Bdellovibrio bacteriovorus (strain ATCC 15356 / DSM 50701 / NCIMB 9529 / HD100)</name>
    <dbReference type="NCBI Taxonomy" id="264462"/>
    <lineage>
        <taxon>Bacteria</taxon>
        <taxon>Pseudomonadati</taxon>
        <taxon>Bdellovibrionota</taxon>
        <taxon>Bdellovibrionia</taxon>
        <taxon>Bdellovibrionales</taxon>
        <taxon>Pseudobdellovibrionaceae</taxon>
        <taxon>Bdellovibrio</taxon>
    </lineage>
</organism>
<sequence length="89" mass="10341">MAVTKDQTSQIVKKFKTSDLDTGSSEVQIALLTAKINDLTNHFAKHKKDHHGRRGLVTMVNKRRKLLDYLHRKDVKKYQDLIKALDIRK</sequence>
<reference key="1">
    <citation type="journal article" date="2004" name="Science">
        <title>A predator unmasked: life cycle of Bdellovibrio bacteriovorus from a genomic perspective.</title>
        <authorList>
            <person name="Rendulic S."/>
            <person name="Jagtap P."/>
            <person name="Rosinus A."/>
            <person name="Eppinger M."/>
            <person name="Baar C."/>
            <person name="Lanz C."/>
            <person name="Keller H."/>
            <person name="Lambert C."/>
            <person name="Evans K.J."/>
            <person name="Goesmann A."/>
            <person name="Meyer F."/>
            <person name="Sockett R.E."/>
            <person name="Schuster S.C."/>
        </authorList>
    </citation>
    <scope>NUCLEOTIDE SEQUENCE [LARGE SCALE GENOMIC DNA]</scope>
    <source>
        <strain>ATCC 15356 / DSM 50701 / NCIMB 9529 / HD100</strain>
    </source>
</reference>
<dbReference type="EMBL" id="BX842650">
    <property type="protein sequence ID" value="CAE79430.1"/>
    <property type="molecule type" value="Genomic_DNA"/>
</dbReference>
<dbReference type="RefSeq" id="WP_011164032.1">
    <property type="nucleotide sequence ID" value="NC_005363.1"/>
</dbReference>
<dbReference type="SMR" id="Q6MMS3"/>
<dbReference type="STRING" id="264462.Bd1550"/>
<dbReference type="GeneID" id="93012547"/>
<dbReference type="KEGG" id="bba:Bd1550"/>
<dbReference type="eggNOG" id="COG0184">
    <property type="taxonomic scope" value="Bacteria"/>
</dbReference>
<dbReference type="HOGENOM" id="CLU_148518_0_0_7"/>
<dbReference type="Proteomes" id="UP000008080">
    <property type="component" value="Chromosome"/>
</dbReference>
<dbReference type="GO" id="GO:0022627">
    <property type="term" value="C:cytosolic small ribosomal subunit"/>
    <property type="evidence" value="ECO:0007669"/>
    <property type="project" value="TreeGrafter"/>
</dbReference>
<dbReference type="GO" id="GO:0019843">
    <property type="term" value="F:rRNA binding"/>
    <property type="evidence" value="ECO:0007669"/>
    <property type="project" value="UniProtKB-UniRule"/>
</dbReference>
<dbReference type="GO" id="GO:0003735">
    <property type="term" value="F:structural constituent of ribosome"/>
    <property type="evidence" value="ECO:0007669"/>
    <property type="project" value="InterPro"/>
</dbReference>
<dbReference type="GO" id="GO:0006412">
    <property type="term" value="P:translation"/>
    <property type="evidence" value="ECO:0007669"/>
    <property type="project" value="UniProtKB-UniRule"/>
</dbReference>
<dbReference type="CDD" id="cd00353">
    <property type="entry name" value="Ribosomal_S15p_S13e"/>
    <property type="match status" value="1"/>
</dbReference>
<dbReference type="FunFam" id="1.10.287.10:FF:000002">
    <property type="entry name" value="30S ribosomal protein S15"/>
    <property type="match status" value="1"/>
</dbReference>
<dbReference type="Gene3D" id="6.10.250.3130">
    <property type="match status" value="1"/>
</dbReference>
<dbReference type="Gene3D" id="1.10.287.10">
    <property type="entry name" value="S15/NS1, RNA-binding"/>
    <property type="match status" value="1"/>
</dbReference>
<dbReference type="HAMAP" id="MF_01343_B">
    <property type="entry name" value="Ribosomal_uS15_B"/>
    <property type="match status" value="1"/>
</dbReference>
<dbReference type="InterPro" id="IPR000589">
    <property type="entry name" value="Ribosomal_uS15"/>
</dbReference>
<dbReference type="InterPro" id="IPR005290">
    <property type="entry name" value="Ribosomal_uS15_bac-type"/>
</dbReference>
<dbReference type="InterPro" id="IPR009068">
    <property type="entry name" value="uS15_NS1_RNA-bd_sf"/>
</dbReference>
<dbReference type="NCBIfam" id="TIGR00952">
    <property type="entry name" value="S15_bact"/>
    <property type="match status" value="1"/>
</dbReference>
<dbReference type="PANTHER" id="PTHR23321">
    <property type="entry name" value="RIBOSOMAL PROTEIN S15, BACTERIAL AND ORGANELLAR"/>
    <property type="match status" value="1"/>
</dbReference>
<dbReference type="PANTHER" id="PTHR23321:SF26">
    <property type="entry name" value="SMALL RIBOSOMAL SUBUNIT PROTEIN US15M"/>
    <property type="match status" value="1"/>
</dbReference>
<dbReference type="Pfam" id="PF00312">
    <property type="entry name" value="Ribosomal_S15"/>
    <property type="match status" value="1"/>
</dbReference>
<dbReference type="SMART" id="SM01387">
    <property type="entry name" value="Ribosomal_S15"/>
    <property type="match status" value="1"/>
</dbReference>
<dbReference type="SUPFAM" id="SSF47060">
    <property type="entry name" value="S15/NS1 RNA-binding domain"/>
    <property type="match status" value="1"/>
</dbReference>
<dbReference type="PROSITE" id="PS00362">
    <property type="entry name" value="RIBOSOMAL_S15"/>
    <property type="match status" value="1"/>
</dbReference>
<proteinExistence type="inferred from homology"/>
<keyword id="KW-1185">Reference proteome</keyword>
<keyword id="KW-0687">Ribonucleoprotein</keyword>
<keyword id="KW-0689">Ribosomal protein</keyword>
<keyword id="KW-0694">RNA-binding</keyword>
<keyword id="KW-0699">rRNA-binding</keyword>
<comment type="function">
    <text evidence="1">One of the primary rRNA binding proteins, it binds directly to 16S rRNA where it helps nucleate assembly of the platform of the 30S subunit by binding and bridging several RNA helices of the 16S rRNA.</text>
</comment>
<comment type="function">
    <text evidence="1">Forms an intersubunit bridge (bridge B4) with the 23S rRNA of the 50S subunit in the ribosome.</text>
</comment>
<comment type="subunit">
    <text evidence="1">Part of the 30S ribosomal subunit. Forms a bridge to the 50S subunit in the 70S ribosome, contacting the 23S rRNA.</text>
</comment>
<comment type="similarity">
    <text evidence="1">Belongs to the universal ribosomal protein uS15 family.</text>
</comment>
<gene>
    <name evidence="1" type="primary">rpsO</name>
    <name type="ordered locus">Bd1550</name>
</gene>
<protein>
    <recommendedName>
        <fullName evidence="1">Small ribosomal subunit protein uS15</fullName>
    </recommendedName>
    <alternativeName>
        <fullName evidence="2">30S ribosomal protein S15</fullName>
    </alternativeName>
</protein>
<accession>Q6MMS3</accession>
<evidence type="ECO:0000255" key="1">
    <source>
        <dbReference type="HAMAP-Rule" id="MF_01343"/>
    </source>
</evidence>
<evidence type="ECO:0000305" key="2"/>
<name>RS15_BDEBA</name>